<comment type="function">
    <text evidence="1">Catalyzes the isomerization between 2-isopropylmalate and 3-isopropylmalate, via the formation of 2-isopropylmaleate.</text>
</comment>
<comment type="catalytic activity">
    <reaction evidence="1">
        <text>(2R,3S)-3-isopropylmalate = (2S)-2-isopropylmalate</text>
        <dbReference type="Rhea" id="RHEA:32287"/>
        <dbReference type="ChEBI" id="CHEBI:1178"/>
        <dbReference type="ChEBI" id="CHEBI:35121"/>
        <dbReference type="EC" id="4.2.1.33"/>
    </reaction>
</comment>
<comment type="cofactor">
    <cofactor evidence="1">
        <name>[4Fe-4S] cluster</name>
        <dbReference type="ChEBI" id="CHEBI:49883"/>
    </cofactor>
    <text evidence="1">Binds 1 [4Fe-4S] cluster per subunit.</text>
</comment>
<comment type="pathway">
    <text evidence="1">Amino-acid biosynthesis; L-leucine biosynthesis; L-leucine from 3-methyl-2-oxobutanoate: step 2/4.</text>
</comment>
<comment type="subunit">
    <text evidence="1">Heterodimer of LeuC and LeuD.</text>
</comment>
<comment type="similarity">
    <text evidence="1">Belongs to the aconitase/IPM isomerase family. LeuC type 1 subfamily.</text>
</comment>
<name>LEUC_TRIV2</name>
<organism>
    <name type="scientific">Trichormus variabilis (strain ATCC 29413 / PCC 7937)</name>
    <name type="common">Anabaena variabilis</name>
    <dbReference type="NCBI Taxonomy" id="240292"/>
    <lineage>
        <taxon>Bacteria</taxon>
        <taxon>Bacillati</taxon>
        <taxon>Cyanobacteriota</taxon>
        <taxon>Cyanophyceae</taxon>
        <taxon>Nostocales</taxon>
        <taxon>Nostocaceae</taxon>
        <taxon>Trichormus</taxon>
    </lineage>
</organism>
<proteinExistence type="inferred from homology"/>
<dbReference type="EC" id="4.2.1.33" evidence="1"/>
<dbReference type="EMBL" id="CP000117">
    <property type="protein sequence ID" value="ABA23572.1"/>
    <property type="molecule type" value="Genomic_DNA"/>
</dbReference>
<dbReference type="SMR" id="Q3M614"/>
<dbReference type="STRING" id="240292.Ava_3967"/>
<dbReference type="KEGG" id="ava:Ava_3967"/>
<dbReference type="eggNOG" id="COG0065">
    <property type="taxonomic scope" value="Bacteria"/>
</dbReference>
<dbReference type="HOGENOM" id="CLU_006714_3_4_3"/>
<dbReference type="UniPathway" id="UPA00048">
    <property type="reaction ID" value="UER00071"/>
</dbReference>
<dbReference type="Proteomes" id="UP000002533">
    <property type="component" value="Chromosome"/>
</dbReference>
<dbReference type="GO" id="GO:0003861">
    <property type="term" value="F:3-isopropylmalate dehydratase activity"/>
    <property type="evidence" value="ECO:0007669"/>
    <property type="project" value="UniProtKB-UniRule"/>
</dbReference>
<dbReference type="GO" id="GO:0051539">
    <property type="term" value="F:4 iron, 4 sulfur cluster binding"/>
    <property type="evidence" value="ECO:0007669"/>
    <property type="project" value="UniProtKB-KW"/>
</dbReference>
<dbReference type="GO" id="GO:0046872">
    <property type="term" value="F:metal ion binding"/>
    <property type="evidence" value="ECO:0007669"/>
    <property type="project" value="UniProtKB-KW"/>
</dbReference>
<dbReference type="GO" id="GO:0009098">
    <property type="term" value="P:L-leucine biosynthetic process"/>
    <property type="evidence" value="ECO:0007669"/>
    <property type="project" value="UniProtKB-UniRule"/>
</dbReference>
<dbReference type="CDD" id="cd01583">
    <property type="entry name" value="IPMI"/>
    <property type="match status" value="1"/>
</dbReference>
<dbReference type="Gene3D" id="3.30.499.10">
    <property type="entry name" value="Aconitase, domain 3"/>
    <property type="match status" value="2"/>
</dbReference>
<dbReference type="HAMAP" id="MF_01026">
    <property type="entry name" value="LeuC_type1"/>
    <property type="match status" value="1"/>
</dbReference>
<dbReference type="InterPro" id="IPR004430">
    <property type="entry name" value="3-IsopropMal_deHydase_lsu"/>
</dbReference>
<dbReference type="InterPro" id="IPR015931">
    <property type="entry name" value="Acnase/IPM_dHydase_lsu_aba_1/3"/>
</dbReference>
<dbReference type="InterPro" id="IPR001030">
    <property type="entry name" value="Acoase/IPM_deHydtase_lsu_aba"/>
</dbReference>
<dbReference type="InterPro" id="IPR018136">
    <property type="entry name" value="Aconitase_4Fe-4S_BS"/>
</dbReference>
<dbReference type="InterPro" id="IPR036008">
    <property type="entry name" value="Aconitase_4Fe-4S_dom"/>
</dbReference>
<dbReference type="InterPro" id="IPR050067">
    <property type="entry name" value="IPM_dehydratase_rel_enz"/>
</dbReference>
<dbReference type="InterPro" id="IPR033941">
    <property type="entry name" value="IPMI_cat"/>
</dbReference>
<dbReference type="NCBIfam" id="TIGR00170">
    <property type="entry name" value="leuC"/>
    <property type="match status" value="1"/>
</dbReference>
<dbReference type="NCBIfam" id="NF004016">
    <property type="entry name" value="PRK05478.1"/>
    <property type="match status" value="1"/>
</dbReference>
<dbReference type="NCBIfam" id="NF009116">
    <property type="entry name" value="PRK12466.1"/>
    <property type="match status" value="1"/>
</dbReference>
<dbReference type="PANTHER" id="PTHR43822:SF9">
    <property type="entry name" value="3-ISOPROPYLMALATE DEHYDRATASE"/>
    <property type="match status" value="1"/>
</dbReference>
<dbReference type="PANTHER" id="PTHR43822">
    <property type="entry name" value="HOMOACONITASE, MITOCHONDRIAL-RELATED"/>
    <property type="match status" value="1"/>
</dbReference>
<dbReference type="Pfam" id="PF00330">
    <property type="entry name" value="Aconitase"/>
    <property type="match status" value="1"/>
</dbReference>
<dbReference type="PRINTS" id="PR00415">
    <property type="entry name" value="ACONITASE"/>
</dbReference>
<dbReference type="SUPFAM" id="SSF53732">
    <property type="entry name" value="Aconitase iron-sulfur domain"/>
    <property type="match status" value="1"/>
</dbReference>
<dbReference type="PROSITE" id="PS00450">
    <property type="entry name" value="ACONITASE_1"/>
    <property type="match status" value="1"/>
</dbReference>
<dbReference type="PROSITE" id="PS01244">
    <property type="entry name" value="ACONITASE_2"/>
    <property type="match status" value="1"/>
</dbReference>
<sequence length="467" mass="50764">MSKGTLFDKVWDLHTVGTLPSGLTQLFIGLHLVHEVTSPQAFAMLRERGLKVLFPERTVATVDHIVPTENQARPFVDRLAEEMIQALEQNCQENNITFYNIGSGNQGIVHVIAPELGLTQPGMTIACGDSHTSSHGAFGAIAFGIGTSQVRDVLASQTLSLSKLKVRKIEVNGTLNPGVYAKDVILHIIRTLGVKGGVGYAYEYAGTTFEQMNMEERMTVCNMAIEGGARCGYVNPDQVTYDYLQGRDFAPQGADWEKAVAWWESIKSDADAEYDDVIVFNAADIPPTVTWGITPGQGIGVNQLIPQPEELLEEDRFVAEEAYRYMDLYPGQPIKGTKIDVCFIGSCTNGRLSDLQEAAKIAKGRHVAEGVKAFVVPGSERVKKAAEAEGLDKIFEAAGFEWREPGCSMCLAMNPDKLEGRQISASSSNRNFKGRQGSASGRTLLMSPAMVATAAIQGEVADVRELL</sequence>
<protein>
    <recommendedName>
        <fullName evidence="1">3-isopropylmalate dehydratase large subunit</fullName>
        <ecNumber evidence="1">4.2.1.33</ecNumber>
    </recommendedName>
    <alternativeName>
        <fullName evidence="1">Alpha-IPM isomerase</fullName>
        <shortName evidence="1">IPMI</shortName>
    </alternativeName>
    <alternativeName>
        <fullName evidence="1">Isopropylmalate isomerase</fullName>
    </alternativeName>
</protein>
<reference key="1">
    <citation type="journal article" date="2014" name="Stand. Genomic Sci.">
        <title>Complete genome sequence of Anabaena variabilis ATCC 29413.</title>
        <authorList>
            <person name="Thiel T."/>
            <person name="Pratte B.S."/>
            <person name="Zhong J."/>
            <person name="Goodwin L."/>
            <person name="Copeland A."/>
            <person name="Lucas S."/>
            <person name="Han C."/>
            <person name="Pitluck S."/>
            <person name="Land M.L."/>
            <person name="Kyrpides N.C."/>
            <person name="Woyke T."/>
        </authorList>
    </citation>
    <scope>NUCLEOTIDE SEQUENCE [LARGE SCALE GENOMIC DNA]</scope>
    <source>
        <strain>ATCC 29413 / PCC 7937</strain>
    </source>
</reference>
<feature type="chain" id="PRO_1000063523" description="3-isopropylmalate dehydratase large subunit">
    <location>
        <begin position="1"/>
        <end position="467"/>
    </location>
</feature>
<feature type="binding site" evidence="1">
    <location>
        <position position="347"/>
    </location>
    <ligand>
        <name>[4Fe-4S] cluster</name>
        <dbReference type="ChEBI" id="CHEBI:49883"/>
    </ligand>
</feature>
<feature type="binding site" evidence="1">
    <location>
        <position position="407"/>
    </location>
    <ligand>
        <name>[4Fe-4S] cluster</name>
        <dbReference type="ChEBI" id="CHEBI:49883"/>
    </ligand>
</feature>
<feature type="binding site" evidence="1">
    <location>
        <position position="410"/>
    </location>
    <ligand>
        <name>[4Fe-4S] cluster</name>
        <dbReference type="ChEBI" id="CHEBI:49883"/>
    </ligand>
</feature>
<accession>Q3M614</accession>
<gene>
    <name evidence="1" type="primary">leuC</name>
    <name type="ordered locus">Ava_3967</name>
</gene>
<evidence type="ECO:0000255" key="1">
    <source>
        <dbReference type="HAMAP-Rule" id="MF_01026"/>
    </source>
</evidence>
<keyword id="KW-0004">4Fe-4S</keyword>
<keyword id="KW-0028">Amino-acid biosynthesis</keyword>
<keyword id="KW-0100">Branched-chain amino acid biosynthesis</keyword>
<keyword id="KW-0408">Iron</keyword>
<keyword id="KW-0411">Iron-sulfur</keyword>
<keyword id="KW-0432">Leucine biosynthesis</keyword>
<keyword id="KW-0456">Lyase</keyword>
<keyword id="KW-0479">Metal-binding</keyword>